<keyword id="KW-0067">ATP-binding</keyword>
<keyword id="KW-0436">Ligase</keyword>
<keyword id="KW-0460">Magnesium</keyword>
<keyword id="KW-0479">Metal-binding</keyword>
<keyword id="KW-0520">NAD</keyword>
<keyword id="KW-0547">Nucleotide-binding</keyword>
<sequence>MLKSQRVTTMKESLISFIREKIEEYNYRGAVVGVSGGVDSAVVLSLCVQALGKDRVFALILPERDSSKDSLKDAVDLCETLGVEYRKRSITPILRKIGAYRLFPPRFFLPNSIVKRYVLNRWNTLSKDPFLDDLRNTGPEEFLKGLAYYRIKHRIRMCLLYFEAEKRGYAVVGTTNRTEYLTGLYVKWGDEAVDIEPIMHLYKTQVFELAKEMNVPEKILKKPPSPDLIPGITDEMAFNMSYLELDRILMKLEKNEDLSDEDPKKVERVKKILEFSEKYRRDIPITFDRI</sequence>
<accession>B9KAZ2</accession>
<organism>
    <name type="scientific">Thermotoga neapolitana (strain ATCC 49049 / DSM 4359 / NBRC 107923 / NS-E)</name>
    <dbReference type="NCBI Taxonomy" id="309803"/>
    <lineage>
        <taxon>Bacteria</taxon>
        <taxon>Thermotogati</taxon>
        <taxon>Thermotogota</taxon>
        <taxon>Thermotogae</taxon>
        <taxon>Thermotogales</taxon>
        <taxon>Thermotogaceae</taxon>
        <taxon>Thermotoga</taxon>
    </lineage>
</organism>
<feature type="chain" id="PRO_1000191514" description="NH(3)-dependent NAD(+) synthetase">
    <location>
        <begin position="1"/>
        <end position="290"/>
    </location>
</feature>
<feature type="binding site" evidence="1">
    <location>
        <begin position="33"/>
        <end position="40"/>
    </location>
    <ligand>
        <name>ATP</name>
        <dbReference type="ChEBI" id="CHEBI:30616"/>
    </ligand>
</feature>
<feature type="binding site" evidence="1">
    <location>
        <position position="39"/>
    </location>
    <ligand>
        <name>Mg(2+)</name>
        <dbReference type="ChEBI" id="CHEBI:18420"/>
    </ligand>
</feature>
<feature type="binding site" evidence="1">
    <location>
        <position position="154"/>
    </location>
    <ligand>
        <name>deamido-NAD(+)</name>
        <dbReference type="ChEBI" id="CHEBI:58437"/>
    </ligand>
</feature>
<feature type="binding site" evidence="1">
    <location>
        <position position="174"/>
    </location>
    <ligand>
        <name>ATP</name>
        <dbReference type="ChEBI" id="CHEBI:30616"/>
    </ligand>
</feature>
<feature type="binding site" evidence="1">
    <location>
        <position position="179"/>
    </location>
    <ligand>
        <name>Mg(2+)</name>
        <dbReference type="ChEBI" id="CHEBI:18420"/>
    </ligand>
</feature>
<feature type="binding site" evidence="1">
    <location>
        <position position="187"/>
    </location>
    <ligand>
        <name>deamido-NAD(+)</name>
        <dbReference type="ChEBI" id="CHEBI:58437"/>
    </ligand>
</feature>
<feature type="binding site" evidence="1">
    <location>
        <position position="194"/>
    </location>
    <ligand>
        <name>deamido-NAD(+)</name>
        <dbReference type="ChEBI" id="CHEBI:58437"/>
    </ligand>
</feature>
<feature type="binding site" evidence="1">
    <location>
        <position position="203"/>
    </location>
    <ligand>
        <name>ATP</name>
        <dbReference type="ChEBI" id="CHEBI:30616"/>
    </ligand>
</feature>
<feature type="binding site" evidence="1">
    <location>
        <position position="225"/>
    </location>
    <ligand>
        <name>ATP</name>
        <dbReference type="ChEBI" id="CHEBI:30616"/>
    </ligand>
</feature>
<proteinExistence type="inferred from homology"/>
<reference key="1">
    <citation type="submission" date="2007-11" db="EMBL/GenBank/DDBJ databases">
        <title>The genome sequence of the hyperthermophilic bacterium Thermotoga neapolitana.</title>
        <authorList>
            <person name="Lim S.K."/>
            <person name="Kim J.S."/>
            <person name="Cha S.H."/>
            <person name="Park B.C."/>
            <person name="Lee D.S."/>
            <person name="Tae H.S."/>
            <person name="Kim S.-J."/>
            <person name="Kim J.J."/>
            <person name="Park K.J."/>
            <person name="Lee S.Y."/>
        </authorList>
    </citation>
    <scope>NUCLEOTIDE SEQUENCE [LARGE SCALE GENOMIC DNA]</scope>
    <source>
        <strain>ATCC 49049 / DSM 4359 / NBRC 107923 / NS-E</strain>
    </source>
</reference>
<comment type="function">
    <text evidence="1">Catalyzes the ATP-dependent amidation of deamido-NAD to form NAD. Uses ammonia as a nitrogen source.</text>
</comment>
<comment type="catalytic activity">
    <reaction evidence="1">
        <text>deamido-NAD(+) + NH4(+) + ATP = AMP + diphosphate + NAD(+) + H(+)</text>
        <dbReference type="Rhea" id="RHEA:21188"/>
        <dbReference type="ChEBI" id="CHEBI:15378"/>
        <dbReference type="ChEBI" id="CHEBI:28938"/>
        <dbReference type="ChEBI" id="CHEBI:30616"/>
        <dbReference type="ChEBI" id="CHEBI:33019"/>
        <dbReference type="ChEBI" id="CHEBI:57540"/>
        <dbReference type="ChEBI" id="CHEBI:58437"/>
        <dbReference type="ChEBI" id="CHEBI:456215"/>
        <dbReference type="EC" id="6.3.1.5"/>
    </reaction>
</comment>
<comment type="pathway">
    <text evidence="1">Cofactor biosynthesis; NAD(+) biosynthesis; NAD(+) from deamido-NAD(+) (ammonia route): step 1/1.</text>
</comment>
<comment type="subunit">
    <text evidence="1">Homodimer.</text>
</comment>
<comment type="similarity">
    <text evidence="1">Belongs to the NAD synthetase family.</text>
</comment>
<gene>
    <name evidence="1" type="primary">nadE</name>
    <name type="ordered locus">CTN_0012</name>
</gene>
<evidence type="ECO:0000255" key="1">
    <source>
        <dbReference type="HAMAP-Rule" id="MF_00193"/>
    </source>
</evidence>
<protein>
    <recommendedName>
        <fullName evidence="1">NH(3)-dependent NAD(+) synthetase</fullName>
        <ecNumber evidence="1">6.3.1.5</ecNumber>
    </recommendedName>
</protein>
<name>NADE_THENN</name>
<dbReference type="EC" id="6.3.1.5" evidence="1"/>
<dbReference type="EMBL" id="CP000916">
    <property type="protein sequence ID" value="ACM22188.1"/>
    <property type="molecule type" value="Genomic_DNA"/>
</dbReference>
<dbReference type="SMR" id="B9KAZ2"/>
<dbReference type="STRING" id="309803.CTN_0012"/>
<dbReference type="KEGG" id="tna:CTN_0012"/>
<dbReference type="eggNOG" id="COG0171">
    <property type="taxonomic scope" value="Bacteria"/>
</dbReference>
<dbReference type="HOGENOM" id="CLU_059327_1_1_0"/>
<dbReference type="UniPathway" id="UPA00253">
    <property type="reaction ID" value="UER00333"/>
</dbReference>
<dbReference type="Proteomes" id="UP000000445">
    <property type="component" value="Chromosome"/>
</dbReference>
<dbReference type="GO" id="GO:0005737">
    <property type="term" value="C:cytoplasm"/>
    <property type="evidence" value="ECO:0007669"/>
    <property type="project" value="InterPro"/>
</dbReference>
<dbReference type="GO" id="GO:0005524">
    <property type="term" value="F:ATP binding"/>
    <property type="evidence" value="ECO:0007669"/>
    <property type="project" value="UniProtKB-UniRule"/>
</dbReference>
<dbReference type="GO" id="GO:0004359">
    <property type="term" value="F:glutaminase activity"/>
    <property type="evidence" value="ECO:0007669"/>
    <property type="project" value="InterPro"/>
</dbReference>
<dbReference type="GO" id="GO:0046872">
    <property type="term" value="F:metal ion binding"/>
    <property type="evidence" value="ECO:0007669"/>
    <property type="project" value="UniProtKB-KW"/>
</dbReference>
<dbReference type="GO" id="GO:0003952">
    <property type="term" value="F:NAD+ synthase (glutamine-hydrolyzing) activity"/>
    <property type="evidence" value="ECO:0007669"/>
    <property type="project" value="InterPro"/>
</dbReference>
<dbReference type="GO" id="GO:0008795">
    <property type="term" value="F:NAD+ synthase activity"/>
    <property type="evidence" value="ECO:0007669"/>
    <property type="project" value="UniProtKB-UniRule"/>
</dbReference>
<dbReference type="GO" id="GO:0009435">
    <property type="term" value="P:NAD biosynthetic process"/>
    <property type="evidence" value="ECO:0007669"/>
    <property type="project" value="UniProtKB-UniRule"/>
</dbReference>
<dbReference type="CDD" id="cd00553">
    <property type="entry name" value="NAD_synthase"/>
    <property type="match status" value="1"/>
</dbReference>
<dbReference type="Gene3D" id="3.40.50.620">
    <property type="entry name" value="HUPs"/>
    <property type="match status" value="1"/>
</dbReference>
<dbReference type="HAMAP" id="MF_00193">
    <property type="entry name" value="NadE_ammonia_dep"/>
    <property type="match status" value="1"/>
</dbReference>
<dbReference type="InterPro" id="IPR022310">
    <property type="entry name" value="NAD/GMP_synthase"/>
</dbReference>
<dbReference type="InterPro" id="IPR003694">
    <property type="entry name" value="NAD_synthase"/>
</dbReference>
<dbReference type="InterPro" id="IPR022926">
    <property type="entry name" value="NH(3)-dep_NAD(+)_synth"/>
</dbReference>
<dbReference type="InterPro" id="IPR014729">
    <property type="entry name" value="Rossmann-like_a/b/a_fold"/>
</dbReference>
<dbReference type="NCBIfam" id="TIGR00552">
    <property type="entry name" value="nadE"/>
    <property type="match status" value="2"/>
</dbReference>
<dbReference type="PANTHER" id="PTHR23090:SF9">
    <property type="entry name" value="GLUTAMINE-DEPENDENT NAD(+) SYNTHETASE"/>
    <property type="match status" value="1"/>
</dbReference>
<dbReference type="PANTHER" id="PTHR23090">
    <property type="entry name" value="NH 3 /GLUTAMINE-DEPENDENT NAD + SYNTHETASE"/>
    <property type="match status" value="1"/>
</dbReference>
<dbReference type="Pfam" id="PF02540">
    <property type="entry name" value="NAD_synthase"/>
    <property type="match status" value="2"/>
</dbReference>
<dbReference type="SUPFAM" id="SSF52402">
    <property type="entry name" value="Adenine nucleotide alpha hydrolases-like"/>
    <property type="match status" value="1"/>
</dbReference>